<feature type="chain" id="PRO_0000168712" description="Putative isomerase YbhH">
    <location>
        <begin position="1"/>
        <end position="350"/>
    </location>
</feature>
<evidence type="ECO:0000305" key="1"/>
<name>YBHH_ECOL6</name>
<comment type="similarity">
    <text evidence="1">Belongs to the PrpF family.</text>
</comment>
<sequence length="350" mass="37060">MKKIPCVMMRGGTSRGAFLLAEHLPEDQTQRDKILMAIMGSGNDLEIDGIGGGNPLTSKVAIISRSSDPRADVDYLFAQVIVHEQRVDTTPNCGNMLSGVGAFAIENGLIAATSPVTRVRIRNVNTGTFIEADVQTPNGVVEYEGSARIDGVPGTAAPVALTFLNAAGTKTGKVFPTDNQIDYFDDVPVTCIDMAMPVVIIPAEYLGKTGYELPAELDADKALLARIESIRLQAGKAMGLGDVSNMVIPKPVLISPAQKGGAINVRYFMPHSCHRALAITGAIAISSSCALEGTVTRQIVPSVGYGNINIEHPSGALDVHLSNEGQDATTLRASVIRTTRKIFSGEVYLP</sequence>
<dbReference type="EC" id="5.-.-.-"/>
<dbReference type="EMBL" id="AE014075">
    <property type="protein sequence ID" value="AAN79319.1"/>
    <property type="molecule type" value="Genomic_DNA"/>
</dbReference>
<dbReference type="RefSeq" id="WP_000723652.1">
    <property type="nucleotide sequence ID" value="NZ_CP051263.1"/>
</dbReference>
<dbReference type="SMR" id="P0AAV9"/>
<dbReference type="STRING" id="199310.c0846"/>
<dbReference type="KEGG" id="ecc:c0846"/>
<dbReference type="eggNOG" id="COG2828">
    <property type="taxonomic scope" value="Bacteria"/>
</dbReference>
<dbReference type="HOGENOM" id="CLU_026443_2_1_6"/>
<dbReference type="BioCyc" id="ECOL199310:C0846-MONOMER"/>
<dbReference type="Proteomes" id="UP000001410">
    <property type="component" value="Chromosome"/>
</dbReference>
<dbReference type="GO" id="GO:0016853">
    <property type="term" value="F:isomerase activity"/>
    <property type="evidence" value="ECO:0007669"/>
    <property type="project" value="UniProtKB-KW"/>
</dbReference>
<dbReference type="Gene3D" id="3.10.310.10">
    <property type="entry name" value="Diaminopimelate Epimerase, Chain A, domain 1"/>
    <property type="match status" value="2"/>
</dbReference>
<dbReference type="InterPro" id="IPR047687">
    <property type="entry name" value="OMA_tautomer-like"/>
</dbReference>
<dbReference type="InterPro" id="IPR007400">
    <property type="entry name" value="PrpF-like"/>
</dbReference>
<dbReference type="NCBIfam" id="NF033377">
    <property type="entry name" value="OMA_tautomer"/>
    <property type="match status" value="1"/>
</dbReference>
<dbReference type="PANTHER" id="PTHR43709">
    <property type="entry name" value="ACONITATE ISOMERASE-RELATED"/>
    <property type="match status" value="1"/>
</dbReference>
<dbReference type="PANTHER" id="PTHR43709:SF3">
    <property type="entry name" value="ISOMERASE YBHH-RELATED"/>
    <property type="match status" value="1"/>
</dbReference>
<dbReference type="Pfam" id="PF04303">
    <property type="entry name" value="PrpF"/>
    <property type="match status" value="1"/>
</dbReference>
<dbReference type="SUPFAM" id="SSF54506">
    <property type="entry name" value="Diaminopimelate epimerase-like"/>
    <property type="match status" value="2"/>
</dbReference>
<gene>
    <name type="primary">ybhH</name>
    <name type="ordered locus">c0846</name>
</gene>
<protein>
    <recommendedName>
        <fullName>Putative isomerase YbhH</fullName>
        <ecNumber>5.-.-.-</ecNumber>
    </recommendedName>
</protein>
<proteinExistence type="inferred from homology"/>
<accession>P0AAV9</accession>
<accession>P75762</accession>
<organism>
    <name type="scientific">Escherichia coli O6:H1 (strain CFT073 / ATCC 700928 / UPEC)</name>
    <dbReference type="NCBI Taxonomy" id="199310"/>
    <lineage>
        <taxon>Bacteria</taxon>
        <taxon>Pseudomonadati</taxon>
        <taxon>Pseudomonadota</taxon>
        <taxon>Gammaproteobacteria</taxon>
        <taxon>Enterobacterales</taxon>
        <taxon>Enterobacteriaceae</taxon>
        <taxon>Escherichia</taxon>
    </lineage>
</organism>
<reference key="1">
    <citation type="journal article" date="2002" name="Proc. Natl. Acad. Sci. U.S.A.">
        <title>Extensive mosaic structure revealed by the complete genome sequence of uropathogenic Escherichia coli.</title>
        <authorList>
            <person name="Welch R.A."/>
            <person name="Burland V."/>
            <person name="Plunkett G. III"/>
            <person name="Redford P."/>
            <person name="Roesch P."/>
            <person name="Rasko D."/>
            <person name="Buckles E.L."/>
            <person name="Liou S.-R."/>
            <person name="Boutin A."/>
            <person name="Hackett J."/>
            <person name="Stroud D."/>
            <person name="Mayhew G.F."/>
            <person name="Rose D.J."/>
            <person name="Zhou S."/>
            <person name="Schwartz D.C."/>
            <person name="Perna N.T."/>
            <person name="Mobley H.L.T."/>
            <person name="Donnenberg M.S."/>
            <person name="Blattner F.R."/>
        </authorList>
    </citation>
    <scope>NUCLEOTIDE SEQUENCE [LARGE SCALE GENOMIC DNA]</scope>
    <source>
        <strain>CFT073 / ATCC 700928 / UPEC</strain>
    </source>
</reference>
<keyword id="KW-0413">Isomerase</keyword>
<keyword id="KW-1185">Reference proteome</keyword>